<name>DIVK_BRUSU</name>
<organism>
    <name type="scientific">Brucella suis biovar 1 (strain 1330)</name>
    <dbReference type="NCBI Taxonomy" id="204722"/>
    <lineage>
        <taxon>Bacteria</taxon>
        <taxon>Pseudomonadati</taxon>
        <taxon>Pseudomonadota</taxon>
        <taxon>Alphaproteobacteria</taxon>
        <taxon>Hyphomicrobiales</taxon>
        <taxon>Brucellaceae</taxon>
        <taxon>Brucella/Ochrobactrum group</taxon>
        <taxon>Brucella</taxon>
    </lineage>
</organism>
<reference key="1">
    <citation type="journal article" date="2002" name="Proc. Natl. Acad. Sci. U.S.A.">
        <title>The Brucella suis genome reveals fundamental similarities between animal and plant pathogens and symbionts.</title>
        <authorList>
            <person name="Paulsen I.T."/>
            <person name="Seshadri R."/>
            <person name="Nelson K.E."/>
            <person name="Eisen J.A."/>
            <person name="Heidelberg J.F."/>
            <person name="Read T.D."/>
            <person name="Dodson R.J."/>
            <person name="Umayam L.A."/>
            <person name="Brinkac L.M."/>
            <person name="Beanan M.J."/>
            <person name="Daugherty S.C."/>
            <person name="DeBoy R.T."/>
            <person name="Durkin A.S."/>
            <person name="Kolonay J.F."/>
            <person name="Madupu R."/>
            <person name="Nelson W.C."/>
            <person name="Ayodeji B."/>
            <person name="Kraul M."/>
            <person name="Shetty J."/>
            <person name="Malek J.A."/>
            <person name="Van Aken S.E."/>
            <person name="Riedmuller S."/>
            <person name="Tettelin H."/>
            <person name="Gill S.R."/>
            <person name="White O."/>
            <person name="Salzberg S.L."/>
            <person name="Hoover D.L."/>
            <person name="Lindler L.E."/>
            <person name="Halling S.M."/>
            <person name="Boyle S.M."/>
            <person name="Fraser C.M."/>
        </authorList>
    </citation>
    <scope>NUCLEOTIDE SEQUENCE [LARGE SCALE GENOMIC DNA]</scope>
    <source>
        <strain>1330</strain>
    </source>
</reference>
<reference key="2">
    <citation type="journal article" date="2011" name="J. Bacteriol.">
        <title>Revised genome sequence of Brucella suis 1330.</title>
        <authorList>
            <person name="Tae H."/>
            <person name="Shallom S."/>
            <person name="Settlage R."/>
            <person name="Preston D."/>
            <person name="Adams L.G."/>
            <person name="Garner H.R."/>
        </authorList>
    </citation>
    <scope>NUCLEOTIDE SEQUENCE [LARGE SCALE GENOMIC DNA]</scope>
    <source>
        <strain>1330</strain>
    </source>
</reference>
<proteinExistence type="inferred from homology"/>
<protein>
    <recommendedName>
        <fullName>Polar-differentiation response regulator DivK</fullName>
    </recommendedName>
</protein>
<keyword id="KW-0963">Cytoplasm</keyword>
<keyword id="KW-0238">DNA-binding</keyword>
<keyword id="KW-0597">Phosphoprotein</keyword>
<keyword id="KW-0804">Transcription</keyword>
<keyword id="KW-0805">Transcription regulation</keyword>
<keyword id="KW-0902">Two-component regulatory system</keyword>
<dbReference type="EMBL" id="AE014292">
    <property type="protein sequence ID" value="AAN33801.1"/>
    <property type="molecule type" value="Genomic_DNA"/>
</dbReference>
<dbReference type="EMBL" id="CP002998">
    <property type="protein sequence ID" value="AEM20078.1"/>
    <property type="molecule type" value="Genomic_DNA"/>
</dbReference>
<dbReference type="PIR" id="AB3592">
    <property type="entry name" value="AB3592"/>
</dbReference>
<dbReference type="RefSeq" id="WP_002966022.1">
    <property type="nucleotide sequence ID" value="NZ_KN046805.1"/>
</dbReference>
<dbReference type="SMR" id="Q8FW53"/>
<dbReference type="KEGG" id="bms:BRA0612"/>
<dbReference type="KEGG" id="bsi:BS1330_II0607"/>
<dbReference type="PATRIC" id="fig|204722.21.peg.526"/>
<dbReference type="HOGENOM" id="CLU_000445_69_17_5"/>
<dbReference type="PRO" id="PR:Q8FW53"/>
<dbReference type="Proteomes" id="UP000007104">
    <property type="component" value="Chromosome II"/>
</dbReference>
<dbReference type="GO" id="GO:0005737">
    <property type="term" value="C:cytoplasm"/>
    <property type="evidence" value="ECO:0007669"/>
    <property type="project" value="UniProtKB-SubCell"/>
</dbReference>
<dbReference type="GO" id="GO:0003677">
    <property type="term" value="F:DNA binding"/>
    <property type="evidence" value="ECO:0007669"/>
    <property type="project" value="UniProtKB-KW"/>
</dbReference>
<dbReference type="GO" id="GO:0000160">
    <property type="term" value="P:phosphorelay signal transduction system"/>
    <property type="evidence" value="ECO:0007669"/>
    <property type="project" value="UniProtKB-KW"/>
</dbReference>
<dbReference type="CDD" id="cd17548">
    <property type="entry name" value="REC_DivK-like"/>
    <property type="match status" value="1"/>
</dbReference>
<dbReference type="Gene3D" id="3.40.50.2300">
    <property type="match status" value="1"/>
</dbReference>
<dbReference type="InterPro" id="IPR050595">
    <property type="entry name" value="Bact_response_regulator"/>
</dbReference>
<dbReference type="InterPro" id="IPR011006">
    <property type="entry name" value="CheY-like_superfamily"/>
</dbReference>
<dbReference type="InterPro" id="IPR001789">
    <property type="entry name" value="Sig_transdc_resp-reg_receiver"/>
</dbReference>
<dbReference type="PANTHER" id="PTHR44591:SF3">
    <property type="entry name" value="RESPONSE REGULATORY DOMAIN-CONTAINING PROTEIN"/>
    <property type="match status" value="1"/>
</dbReference>
<dbReference type="PANTHER" id="PTHR44591">
    <property type="entry name" value="STRESS RESPONSE REGULATOR PROTEIN 1"/>
    <property type="match status" value="1"/>
</dbReference>
<dbReference type="Pfam" id="PF00072">
    <property type="entry name" value="Response_reg"/>
    <property type="match status" value="1"/>
</dbReference>
<dbReference type="SMART" id="SM00448">
    <property type="entry name" value="REC"/>
    <property type="match status" value="1"/>
</dbReference>
<dbReference type="SUPFAM" id="SSF52172">
    <property type="entry name" value="CheY-like"/>
    <property type="match status" value="1"/>
</dbReference>
<dbReference type="PROSITE" id="PS50110">
    <property type="entry name" value="RESPONSE_REGULATORY"/>
    <property type="match status" value="1"/>
</dbReference>
<sequence>MTKSVMIVEDNELNMKLFRDLIEASGYETIRTRSGLEALDLAREHHPDLILMDIQLPEVSGLEVTKWLKDDEELRHIPVIAVTAFAMKGDEERIRQGGCEAYISKPISVPRFIETIKSYLGDA</sequence>
<evidence type="ECO:0000250" key="1"/>
<evidence type="ECO:0000255" key="2">
    <source>
        <dbReference type="PROSITE-ProRule" id="PRU00169"/>
    </source>
</evidence>
<gene>
    <name type="primary">divK</name>
    <name type="ordered locus">BRA0612</name>
    <name type="ordered locus">BS1330_II0607</name>
</gene>
<feature type="chain" id="PRO_0000363211" description="Polar-differentiation response regulator DivK">
    <location>
        <begin position="1"/>
        <end position="123"/>
    </location>
</feature>
<feature type="domain" description="Response regulatory" evidence="2">
    <location>
        <begin position="4"/>
        <end position="120"/>
    </location>
</feature>
<feature type="modified residue" description="4-aspartylphosphate" evidence="2">
    <location>
        <position position="53"/>
    </location>
</feature>
<accession>Q8FW53</accession>
<accession>G0KCZ0</accession>
<comment type="function">
    <text evidence="1">Essential protein that is involved in the control of cell division, probably through the regulation of ctrA. Its phosphorylation status is regulated by PdhS (By similarity).</text>
</comment>
<comment type="subunit">
    <text evidence="1">Interacts with DivL, PleC, DivJ and PdhS.</text>
</comment>
<comment type="subcellular location">
    <subcellularLocation>
        <location evidence="1">Cytoplasm</location>
    </subcellularLocation>
    <text evidence="1">Localized at one pole of the cell. Colocalizes with PdhS (By similarity).</text>
</comment>